<name>RSCA1_PIG</name>
<dbReference type="EMBL" id="X64315">
    <property type="protein sequence ID" value="CAA45596.2"/>
    <property type="molecule type" value="mRNA"/>
</dbReference>
<dbReference type="PIR" id="A49112">
    <property type="entry name" value="A49112"/>
</dbReference>
<dbReference type="RefSeq" id="NP_998958.1">
    <property type="nucleotide sequence ID" value="NM_213793.1"/>
</dbReference>
<dbReference type="SMR" id="Q29106"/>
<dbReference type="FunCoup" id="Q29106">
    <property type="interactions" value="44"/>
</dbReference>
<dbReference type="STRING" id="9823.ENSSSCP00000063844"/>
<dbReference type="iPTMnet" id="Q29106"/>
<dbReference type="PaxDb" id="9823-ENSSSCP00000003759"/>
<dbReference type="GeneID" id="396699"/>
<dbReference type="KEGG" id="ssc:396699"/>
<dbReference type="CTD" id="6248"/>
<dbReference type="eggNOG" id="ENOG502RYJA">
    <property type="taxonomic scope" value="Eukaryota"/>
</dbReference>
<dbReference type="InParanoid" id="Q29106"/>
<dbReference type="OrthoDB" id="1047367at2759"/>
<dbReference type="ChiTaRS" id="RSC1A1">
    <property type="organism name" value="pig"/>
</dbReference>
<dbReference type="Proteomes" id="UP000008227">
    <property type="component" value="Unplaced"/>
</dbReference>
<dbReference type="Proteomes" id="UP000314985">
    <property type="component" value="Unplaced"/>
</dbReference>
<dbReference type="Proteomes" id="UP000694570">
    <property type="component" value="Unplaced"/>
</dbReference>
<dbReference type="Proteomes" id="UP000694571">
    <property type="component" value="Unplaced"/>
</dbReference>
<dbReference type="Proteomes" id="UP000694720">
    <property type="component" value="Unplaced"/>
</dbReference>
<dbReference type="Proteomes" id="UP000694722">
    <property type="component" value="Unplaced"/>
</dbReference>
<dbReference type="Proteomes" id="UP000694723">
    <property type="component" value="Unplaced"/>
</dbReference>
<dbReference type="Proteomes" id="UP000694724">
    <property type="component" value="Unplaced"/>
</dbReference>
<dbReference type="Proteomes" id="UP000694725">
    <property type="component" value="Unplaced"/>
</dbReference>
<dbReference type="Proteomes" id="UP000694726">
    <property type="component" value="Unplaced"/>
</dbReference>
<dbReference type="Proteomes" id="UP000694727">
    <property type="component" value="Unplaced"/>
</dbReference>
<dbReference type="Proteomes" id="UP000694728">
    <property type="component" value="Unplaced"/>
</dbReference>
<dbReference type="GO" id="GO:0005794">
    <property type="term" value="C:Golgi apparatus"/>
    <property type="evidence" value="ECO:0007669"/>
    <property type="project" value="UniProtKB-SubCell"/>
</dbReference>
<dbReference type="GO" id="GO:0005634">
    <property type="term" value="C:nucleus"/>
    <property type="evidence" value="ECO:0007669"/>
    <property type="project" value="UniProtKB-SubCell"/>
</dbReference>
<dbReference type="GO" id="GO:0005886">
    <property type="term" value="C:plasma membrane"/>
    <property type="evidence" value="ECO:0007669"/>
    <property type="project" value="UniProtKB-SubCell"/>
</dbReference>
<dbReference type="InterPro" id="IPR015940">
    <property type="entry name" value="UBA"/>
</dbReference>
<dbReference type="PANTHER" id="PTHR15397:SF3">
    <property type="entry name" value="DNA DAMAGE INDUCIBLE 1 HOMOLOG 2"/>
    <property type="match status" value="1"/>
</dbReference>
<dbReference type="PANTHER" id="PTHR15397">
    <property type="entry name" value="SODIUM-GLUCOSE COTRANSPORTER REGULATORY PROTEIN -RELATED"/>
    <property type="match status" value="1"/>
</dbReference>
<dbReference type="SMART" id="SM00165">
    <property type="entry name" value="UBA"/>
    <property type="match status" value="1"/>
</dbReference>
<dbReference type="PROSITE" id="PS50030">
    <property type="entry name" value="UBA"/>
    <property type="match status" value="1"/>
</dbReference>
<keyword id="KW-1003">Cell membrane</keyword>
<keyword id="KW-0333">Golgi apparatus</keyword>
<keyword id="KW-0472">Membrane</keyword>
<keyword id="KW-0539">Nucleus</keyword>
<keyword id="KW-1185">Reference proteome</keyword>
<keyword id="KW-0804">Transcription</keyword>
<keyword id="KW-0805">Transcription regulation</keyword>
<gene>
    <name type="primary">RSC1A1</name>
</gene>
<sequence>MSSLPTSDGFNHQAHPSGQRPEIGSPPSLAHSVSASVCPFKPSDPDSIEPKAVKAVKALKASAEFQITFERKEQLPLQDPSDCASSADNAPANQTPAIPLQNSLKEAIVADNLEKSAEGSTQGLKSHLHTRQEASLSVTTTRMQEPQRLIGEKGWHPEYQDPSQVNGLQQHEEPRNEQHEVVQQNAPHDPEHLCNTGDLELLGERQQNQPKSVGLETAVRGDRPQQDVDLPGTEKNILPYGCFGCSSSETFMEIDTVEQSLVAVLNSAGGQNTSVRNISASDLTVDNPLMEVETLKCNPSSEFLSNPTSTQNLQLPESSVEMSGTNKEYGNHPSSLSLCGTCQPSVESAEESCSSITAALKELHELLVISSKPALENTSEEVTCRSEIVTEGQTDVKDLSERWTQSEHLTAAQNEQCSQVSFYQATSVSVKTEELTDTSTDAGTEDVENITSSGPGDGLLVDKENVPRSRESVNESSLVTLDSAKTSNQPHCTLGVEISPGLLAGEEGALNQTSEQTESLSSSFILVKDLGQGTQNPVTNRPETRENVCPEAAGLRQEFEPPTSHPSSSPSFLAPLIFPAADIDRILRAGFTLQEALGALHRVGGNADLALLVLLAKNIVVPT</sequence>
<evidence type="ECO:0000250" key="1"/>
<evidence type="ECO:0000255" key="2">
    <source>
        <dbReference type="PROSITE-ProRule" id="PRU00212"/>
    </source>
</evidence>
<evidence type="ECO:0000256" key="3">
    <source>
        <dbReference type="SAM" id="MobiDB-lite"/>
    </source>
</evidence>
<evidence type="ECO:0000269" key="4">
    <source>
    </source>
</evidence>
<evidence type="ECO:0000269" key="5">
    <source>
    </source>
</evidence>
<feature type="chain" id="PRO_0000324152" description="Regulatory solute carrier protein family 1 member 1">
    <location>
        <begin position="1"/>
        <end position="623"/>
    </location>
</feature>
<feature type="domain" description="UBA" evidence="2">
    <location>
        <begin position="577"/>
        <end position="617"/>
    </location>
</feature>
<feature type="region of interest" description="Disordered" evidence="3">
    <location>
        <begin position="1"/>
        <end position="48"/>
    </location>
</feature>
<feature type="region of interest" description="Disordered" evidence="3">
    <location>
        <begin position="71"/>
        <end position="99"/>
    </location>
</feature>
<feature type="region of interest" description="Disordered" evidence="3">
    <location>
        <begin position="116"/>
        <end position="189"/>
    </location>
</feature>
<feature type="region of interest" description="Disordered" evidence="3">
    <location>
        <begin position="433"/>
        <end position="493"/>
    </location>
</feature>
<feature type="compositionally biased region" description="Polar residues" evidence="3">
    <location>
        <begin position="1"/>
        <end position="16"/>
    </location>
</feature>
<feature type="compositionally biased region" description="Polar residues" evidence="3">
    <location>
        <begin position="83"/>
        <end position="99"/>
    </location>
</feature>
<feature type="compositionally biased region" description="Polar residues" evidence="3">
    <location>
        <begin position="133"/>
        <end position="144"/>
    </location>
</feature>
<feature type="compositionally biased region" description="Basic and acidic residues" evidence="3">
    <location>
        <begin position="150"/>
        <end position="159"/>
    </location>
</feature>
<feature type="compositionally biased region" description="Basic and acidic residues" evidence="3">
    <location>
        <begin position="170"/>
        <end position="180"/>
    </location>
</feature>
<feature type="compositionally biased region" description="Basic and acidic residues" evidence="3">
    <location>
        <begin position="460"/>
        <end position="473"/>
    </location>
</feature>
<feature type="compositionally biased region" description="Polar residues" evidence="3">
    <location>
        <begin position="474"/>
        <end position="491"/>
    </location>
</feature>
<comment type="function">
    <text evidence="1 4">Mediates transcriptional and post-transcriptional regulation of SLC5A1. Inhibits a dynamin and PKC-dependent exocytotic pathway of SLC5A1. Also involved in transcriptional regulation of SLC22A2. Exhibits glucose-dependent, short-term inhibition of SLC5A1 and SLC22A2 by inhibiting the release of vesicles from the trans-Golgi network (By similarity).</text>
</comment>
<comment type="subunit">
    <text evidence="1">Interacts with YRDC.</text>
</comment>
<comment type="subcellular location">
    <subcellularLocation>
        <location>Cell membrane</location>
    </subcellularLocation>
    <subcellularLocation>
        <location>Nucleus</location>
    </subcellularLocation>
    <subcellularLocation>
        <location>Golgi apparatus</location>
        <location>trans-Golgi network</location>
    </subcellularLocation>
    <text>Localizes at the inner side of the plasma membrane. Nuclear localization in subconfluent LLC-PK1 cells is drastically decreased after cell confluence.</text>
</comment>
<comment type="tissue specificity">
    <text evidence="5">Renal outer cortex and outer medulla, small intestine and liver.</text>
</comment>
<protein>
    <recommendedName>
        <fullName>Regulatory solute carrier protein family 1 member 1</fullName>
    </recommendedName>
    <alternativeName>
        <fullName>Transporter regulator RS1</fullName>
    </alternativeName>
</protein>
<reference key="1">
    <citation type="journal article" date="1993" name="J. Biol. Chem.">
        <title>Cloning of a membrane-associated protein which modifies activity and properties of the Na(+)-D-glucose cotransporter.</title>
        <authorList>
            <person name="Veyhl M."/>
            <person name="Spangenberg J."/>
            <person name="Pueschel B."/>
            <person name="Poppe R."/>
            <person name="Fritzsch G."/>
            <person name="Koepsell H."/>
        </authorList>
    </citation>
    <scope>NUCLEOTIDE SEQUENCE [MRNA]</scope>
    <scope>TISSUE SPECIFICITY</scope>
    <source>
        <tissue>Kidney</tissue>
    </source>
</reference>
<reference key="2">
    <citation type="journal article" date="2000" name="Biochim. Biophys. Acta">
        <title>The transport modifier RS1 is localized at the inner side of the plasma membrane and changes membrane capacitance.</title>
        <authorList>
            <person name="Valentin M."/>
            <person name="Kuehlkamp T."/>
            <person name="Wagner K."/>
            <person name="Krohne G."/>
            <person name="Arndt P."/>
            <person name="Baumgarten K."/>
            <person name="Weber W.-M."/>
            <person name="Segal A."/>
            <person name="Veyhl M."/>
            <person name="Koepsell H."/>
        </authorList>
    </citation>
    <scope>SUBCELLULAR LOCATION</scope>
</reference>
<reference key="3">
    <citation type="journal article" date="2001" name="J. Biol. Chem.">
        <title>The plasma membrane-associated protein RS1 decreases transcription of the transporter SGLT1 in confluent LLC-PK1 cells.</title>
        <authorList>
            <person name="Korn T."/>
            <person name="Kuehlkamp T."/>
            <person name="Track C."/>
            <person name="Schatz I."/>
            <person name="Baumgarten K."/>
            <person name="Gorboulev V."/>
            <person name="Koepsell H."/>
        </authorList>
    </citation>
    <scope>FUNCTION</scope>
    <scope>SUBCELLULAR LOCATION</scope>
</reference>
<reference key="4">
    <citation type="journal article" date="2006" name="Am. J. Physiol.">
        <title>Transporter regulator RS1 (RSC1A1) coats the trans-Golgi network and migrates into the nucleus.</title>
        <authorList>
            <person name="Kroiss M."/>
            <person name="Leyerer M."/>
            <person name="Gorboulev V."/>
            <person name="Kuehlkamp T."/>
            <person name="Kipp H."/>
            <person name="Koepsell H."/>
        </authorList>
    </citation>
    <scope>SUBCELLULAR LOCATION</scope>
</reference>
<organism>
    <name type="scientific">Sus scrofa</name>
    <name type="common">Pig</name>
    <dbReference type="NCBI Taxonomy" id="9823"/>
    <lineage>
        <taxon>Eukaryota</taxon>
        <taxon>Metazoa</taxon>
        <taxon>Chordata</taxon>
        <taxon>Craniata</taxon>
        <taxon>Vertebrata</taxon>
        <taxon>Euteleostomi</taxon>
        <taxon>Mammalia</taxon>
        <taxon>Eutheria</taxon>
        <taxon>Laurasiatheria</taxon>
        <taxon>Artiodactyla</taxon>
        <taxon>Suina</taxon>
        <taxon>Suidae</taxon>
        <taxon>Sus</taxon>
    </lineage>
</organism>
<accession>Q29106</accession>
<proteinExistence type="evidence at transcript level"/>